<name>GPDA_STRPS</name>
<reference key="1">
    <citation type="journal article" date="2009" name="BMC Genomics">
        <title>Genome evolution driven by host adaptations results in a more virulent and antimicrobial-resistant Streptococcus pneumoniae serotype 14.</title>
        <authorList>
            <person name="Ding F."/>
            <person name="Tang P."/>
            <person name="Hsu M.-H."/>
            <person name="Cui P."/>
            <person name="Hu S."/>
            <person name="Yu J."/>
            <person name="Chiu C.-H."/>
        </authorList>
    </citation>
    <scope>NUCLEOTIDE SEQUENCE [LARGE SCALE GENOMIC DNA]</scope>
    <source>
        <strain>CGSP14</strain>
    </source>
</reference>
<sequence>MEKQTVAVLGPGSWGTALSQVLNDNGHEVRIWGNLPEQINEINTHHTNKHYFKDVVLDENIIAYTDLAETLKDVDAILFVVPTKVTRLVAQQVAQTLDHKVIIMHASKGLEPDSHKQLSTILEEEIPEHLRSDIVVVSGPSHAEETIVRDLTLITAASKDLQTAQYVQKLFSNHYFRLYTNTDVIGVETAGALKNIIAVGAGALHGLGFGDNAKAAIIARGLAEITRLGVALGASPLTYSGLSGVGDLIVTGTSIHSRNWRAGDALGRGESLADIEANMGMVIEGISTTRAAYELAQELGVYMPITQAIYQVIYHGTNIKDAIYDIMNNEFKAENEWS</sequence>
<gene>
    <name evidence="1" type="primary">gpsA</name>
    <name type="ordered locus">SPCG_2057</name>
</gene>
<organism>
    <name type="scientific">Streptococcus pneumoniae (strain CGSP14)</name>
    <dbReference type="NCBI Taxonomy" id="516950"/>
    <lineage>
        <taxon>Bacteria</taxon>
        <taxon>Bacillati</taxon>
        <taxon>Bacillota</taxon>
        <taxon>Bacilli</taxon>
        <taxon>Lactobacillales</taxon>
        <taxon>Streptococcaceae</taxon>
        <taxon>Streptococcus</taxon>
    </lineage>
</organism>
<evidence type="ECO:0000255" key="1">
    <source>
        <dbReference type="HAMAP-Rule" id="MF_00394"/>
    </source>
</evidence>
<dbReference type="EC" id="1.1.1.94" evidence="1"/>
<dbReference type="EMBL" id="CP001033">
    <property type="protein sequence ID" value="ACB91309.1"/>
    <property type="molecule type" value="Genomic_DNA"/>
</dbReference>
<dbReference type="RefSeq" id="WP_000415100.1">
    <property type="nucleotide sequence ID" value="NC_010582.1"/>
</dbReference>
<dbReference type="SMR" id="B2IN10"/>
<dbReference type="KEGG" id="spw:SPCG_2057"/>
<dbReference type="HOGENOM" id="CLU_033449_0_2_9"/>
<dbReference type="UniPathway" id="UPA00940"/>
<dbReference type="GO" id="GO:0005829">
    <property type="term" value="C:cytosol"/>
    <property type="evidence" value="ECO:0007669"/>
    <property type="project" value="TreeGrafter"/>
</dbReference>
<dbReference type="GO" id="GO:0047952">
    <property type="term" value="F:glycerol-3-phosphate dehydrogenase [NAD(P)+] activity"/>
    <property type="evidence" value="ECO:0007669"/>
    <property type="project" value="UniProtKB-UniRule"/>
</dbReference>
<dbReference type="GO" id="GO:0051287">
    <property type="term" value="F:NAD binding"/>
    <property type="evidence" value="ECO:0007669"/>
    <property type="project" value="InterPro"/>
</dbReference>
<dbReference type="GO" id="GO:0005975">
    <property type="term" value="P:carbohydrate metabolic process"/>
    <property type="evidence" value="ECO:0007669"/>
    <property type="project" value="InterPro"/>
</dbReference>
<dbReference type="GO" id="GO:0046167">
    <property type="term" value="P:glycerol-3-phosphate biosynthetic process"/>
    <property type="evidence" value="ECO:0007669"/>
    <property type="project" value="UniProtKB-UniRule"/>
</dbReference>
<dbReference type="GO" id="GO:0046168">
    <property type="term" value="P:glycerol-3-phosphate catabolic process"/>
    <property type="evidence" value="ECO:0007669"/>
    <property type="project" value="InterPro"/>
</dbReference>
<dbReference type="GO" id="GO:0006650">
    <property type="term" value="P:glycerophospholipid metabolic process"/>
    <property type="evidence" value="ECO:0007669"/>
    <property type="project" value="UniProtKB-UniRule"/>
</dbReference>
<dbReference type="GO" id="GO:0008654">
    <property type="term" value="P:phospholipid biosynthetic process"/>
    <property type="evidence" value="ECO:0007669"/>
    <property type="project" value="UniProtKB-KW"/>
</dbReference>
<dbReference type="FunFam" id="1.10.1040.10:FF:000001">
    <property type="entry name" value="Glycerol-3-phosphate dehydrogenase [NAD(P)+]"/>
    <property type="match status" value="1"/>
</dbReference>
<dbReference type="FunFam" id="3.40.50.720:FF:000019">
    <property type="entry name" value="Glycerol-3-phosphate dehydrogenase [NAD(P)+]"/>
    <property type="match status" value="1"/>
</dbReference>
<dbReference type="Gene3D" id="1.10.1040.10">
    <property type="entry name" value="N-(1-d-carboxylethyl)-l-norvaline Dehydrogenase, domain 2"/>
    <property type="match status" value="1"/>
</dbReference>
<dbReference type="Gene3D" id="3.40.50.720">
    <property type="entry name" value="NAD(P)-binding Rossmann-like Domain"/>
    <property type="match status" value="1"/>
</dbReference>
<dbReference type="HAMAP" id="MF_00394">
    <property type="entry name" value="NAD_Glyc3P_dehydrog"/>
    <property type="match status" value="1"/>
</dbReference>
<dbReference type="InterPro" id="IPR008927">
    <property type="entry name" value="6-PGluconate_DH-like_C_sf"/>
</dbReference>
<dbReference type="InterPro" id="IPR013328">
    <property type="entry name" value="6PGD_dom2"/>
</dbReference>
<dbReference type="InterPro" id="IPR006168">
    <property type="entry name" value="G3P_DH_NAD-dep"/>
</dbReference>
<dbReference type="InterPro" id="IPR006109">
    <property type="entry name" value="G3P_DH_NAD-dep_C"/>
</dbReference>
<dbReference type="InterPro" id="IPR011128">
    <property type="entry name" value="G3P_DH_NAD-dep_N"/>
</dbReference>
<dbReference type="InterPro" id="IPR036291">
    <property type="entry name" value="NAD(P)-bd_dom_sf"/>
</dbReference>
<dbReference type="NCBIfam" id="NF000940">
    <property type="entry name" value="PRK00094.1-2"/>
    <property type="match status" value="1"/>
</dbReference>
<dbReference type="NCBIfam" id="NF000941">
    <property type="entry name" value="PRK00094.1-3"/>
    <property type="match status" value="1"/>
</dbReference>
<dbReference type="NCBIfam" id="NF000942">
    <property type="entry name" value="PRK00094.1-4"/>
    <property type="match status" value="1"/>
</dbReference>
<dbReference type="PANTHER" id="PTHR11728">
    <property type="entry name" value="GLYCEROL-3-PHOSPHATE DEHYDROGENASE"/>
    <property type="match status" value="1"/>
</dbReference>
<dbReference type="PANTHER" id="PTHR11728:SF1">
    <property type="entry name" value="GLYCEROL-3-PHOSPHATE DEHYDROGENASE [NAD(+)] 2, CHLOROPLASTIC"/>
    <property type="match status" value="1"/>
</dbReference>
<dbReference type="Pfam" id="PF07479">
    <property type="entry name" value="NAD_Gly3P_dh_C"/>
    <property type="match status" value="1"/>
</dbReference>
<dbReference type="Pfam" id="PF01210">
    <property type="entry name" value="NAD_Gly3P_dh_N"/>
    <property type="match status" value="1"/>
</dbReference>
<dbReference type="PIRSF" id="PIRSF000114">
    <property type="entry name" value="Glycerol-3-P_dh"/>
    <property type="match status" value="1"/>
</dbReference>
<dbReference type="PRINTS" id="PR00077">
    <property type="entry name" value="GPDHDRGNASE"/>
</dbReference>
<dbReference type="SUPFAM" id="SSF48179">
    <property type="entry name" value="6-phosphogluconate dehydrogenase C-terminal domain-like"/>
    <property type="match status" value="1"/>
</dbReference>
<dbReference type="SUPFAM" id="SSF51735">
    <property type="entry name" value="NAD(P)-binding Rossmann-fold domains"/>
    <property type="match status" value="1"/>
</dbReference>
<dbReference type="PROSITE" id="PS00957">
    <property type="entry name" value="NAD_G3PDH"/>
    <property type="match status" value="1"/>
</dbReference>
<proteinExistence type="inferred from homology"/>
<feature type="chain" id="PRO_1000123197" description="Glycerol-3-phosphate dehydrogenase [NAD(P)+]">
    <location>
        <begin position="1"/>
        <end position="338"/>
    </location>
</feature>
<feature type="active site" description="Proton acceptor" evidence="1">
    <location>
        <position position="194"/>
    </location>
</feature>
<feature type="binding site" evidence="1">
    <location>
        <position position="13"/>
    </location>
    <ligand>
        <name>NADPH</name>
        <dbReference type="ChEBI" id="CHEBI:57783"/>
    </ligand>
</feature>
<feature type="binding site" evidence="1">
    <location>
        <position position="14"/>
    </location>
    <ligand>
        <name>NADPH</name>
        <dbReference type="ChEBI" id="CHEBI:57783"/>
    </ligand>
</feature>
<feature type="binding site" evidence="1">
    <location>
        <position position="108"/>
    </location>
    <ligand>
        <name>NADPH</name>
        <dbReference type="ChEBI" id="CHEBI:57783"/>
    </ligand>
</feature>
<feature type="binding site" evidence="1">
    <location>
        <position position="108"/>
    </location>
    <ligand>
        <name>sn-glycerol 3-phosphate</name>
        <dbReference type="ChEBI" id="CHEBI:57597"/>
    </ligand>
</feature>
<feature type="binding site" evidence="1">
    <location>
        <position position="139"/>
    </location>
    <ligand>
        <name>sn-glycerol 3-phosphate</name>
        <dbReference type="ChEBI" id="CHEBI:57597"/>
    </ligand>
</feature>
<feature type="binding site" evidence="1">
    <location>
        <position position="141"/>
    </location>
    <ligand>
        <name>sn-glycerol 3-phosphate</name>
        <dbReference type="ChEBI" id="CHEBI:57597"/>
    </ligand>
</feature>
<feature type="binding site" evidence="1">
    <location>
        <position position="143"/>
    </location>
    <ligand>
        <name>NADPH</name>
        <dbReference type="ChEBI" id="CHEBI:57783"/>
    </ligand>
</feature>
<feature type="binding site" evidence="1">
    <location>
        <position position="194"/>
    </location>
    <ligand>
        <name>sn-glycerol 3-phosphate</name>
        <dbReference type="ChEBI" id="CHEBI:57597"/>
    </ligand>
</feature>
<feature type="binding site" evidence="1">
    <location>
        <position position="247"/>
    </location>
    <ligand>
        <name>sn-glycerol 3-phosphate</name>
        <dbReference type="ChEBI" id="CHEBI:57597"/>
    </ligand>
</feature>
<feature type="binding site" evidence="1">
    <location>
        <position position="257"/>
    </location>
    <ligand>
        <name>sn-glycerol 3-phosphate</name>
        <dbReference type="ChEBI" id="CHEBI:57597"/>
    </ligand>
</feature>
<feature type="binding site" evidence="1">
    <location>
        <position position="258"/>
    </location>
    <ligand>
        <name>NADPH</name>
        <dbReference type="ChEBI" id="CHEBI:57783"/>
    </ligand>
</feature>
<feature type="binding site" evidence="1">
    <location>
        <position position="258"/>
    </location>
    <ligand>
        <name>sn-glycerol 3-phosphate</name>
        <dbReference type="ChEBI" id="CHEBI:57597"/>
    </ligand>
</feature>
<feature type="binding site" evidence="1">
    <location>
        <position position="259"/>
    </location>
    <ligand>
        <name>sn-glycerol 3-phosphate</name>
        <dbReference type="ChEBI" id="CHEBI:57597"/>
    </ligand>
</feature>
<feature type="binding site" evidence="1">
    <location>
        <position position="282"/>
    </location>
    <ligand>
        <name>NADPH</name>
        <dbReference type="ChEBI" id="CHEBI:57783"/>
    </ligand>
</feature>
<feature type="binding site" evidence="1">
    <location>
        <position position="284"/>
    </location>
    <ligand>
        <name>NADPH</name>
        <dbReference type="ChEBI" id="CHEBI:57783"/>
    </ligand>
</feature>
<comment type="function">
    <text evidence="1">Catalyzes the reduction of the glycolytic intermediate dihydroxyacetone phosphate (DHAP) to sn-glycerol 3-phosphate (G3P), the key precursor for phospholipid synthesis.</text>
</comment>
<comment type="catalytic activity">
    <reaction evidence="1">
        <text>sn-glycerol 3-phosphate + NAD(+) = dihydroxyacetone phosphate + NADH + H(+)</text>
        <dbReference type="Rhea" id="RHEA:11092"/>
        <dbReference type="ChEBI" id="CHEBI:15378"/>
        <dbReference type="ChEBI" id="CHEBI:57540"/>
        <dbReference type="ChEBI" id="CHEBI:57597"/>
        <dbReference type="ChEBI" id="CHEBI:57642"/>
        <dbReference type="ChEBI" id="CHEBI:57945"/>
        <dbReference type="EC" id="1.1.1.94"/>
    </reaction>
    <physiologicalReaction direction="right-to-left" evidence="1">
        <dbReference type="Rhea" id="RHEA:11094"/>
    </physiologicalReaction>
</comment>
<comment type="catalytic activity">
    <reaction evidence="1">
        <text>sn-glycerol 3-phosphate + NADP(+) = dihydroxyacetone phosphate + NADPH + H(+)</text>
        <dbReference type="Rhea" id="RHEA:11096"/>
        <dbReference type="ChEBI" id="CHEBI:15378"/>
        <dbReference type="ChEBI" id="CHEBI:57597"/>
        <dbReference type="ChEBI" id="CHEBI:57642"/>
        <dbReference type="ChEBI" id="CHEBI:57783"/>
        <dbReference type="ChEBI" id="CHEBI:58349"/>
        <dbReference type="EC" id="1.1.1.94"/>
    </reaction>
    <physiologicalReaction direction="right-to-left" evidence="1">
        <dbReference type="Rhea" id="RHEA:11098"/>
    </physiologicalReaction>
</comment>
<comment type="pathway">
    <text evidence="1">Membrane lipid metabolism; glycerophospholipid metabolism.</text>
</comment>
<comment type="subcellular location">
    <subcellularLocation>
        <location evidence="1">Cytoplasm</location>
    </subcellularLocation>
</comment>
<comment type="similarity">
    <text evidence="1">Belongs to the NAD-dependent glycerol-3-phosphate dehydrogenase family.</text>
</comment>
<keyword id="KW-0963">Cytoplasm</keyword>
<keyword id="KW-0444">Lipid biosynthesis</keyword>
<keyword id="KW-0443">Lipid metabolism</keyword>
<keyword id="KW-0520">NAD</keyword>
<keyword id="KW-0521">NADP</keyword>
<keyword id="KW-0547">Nucleotide-binding</keyword>
<keyword id="KW-0560">Oxidoreductase</keyword>
<keyword id="KW-0594">Phospholipid biosynthesis</keyword>
<keyword id="KW-1208">Phospholipid metabolism</keyword>
<protein>
    <recommendedName>
        <fullName evidence="1">Glycerol-3-phosphate dehydrogenase [NAD(P)+]</fullName>
        <ecNumber evidence="1">1.1.1.94</ecNumber>
    </recommendedName>
    <alternativeName>
        <fullName evidence="1">NAD(P)(+)-dependent glycerol-3-phosphate dehydrogenase</fullName>
    </alternativeName>
    <alternativeName>
        <fullName evidence="1">NAD(P)H-dependent dihydroxyacetone-phosphate reductase</fullName>
    </alternativeName>
</protein>
<accession>B2IN10</accession>